<dbReference type="EC" id="6.2.1.1" evidence="2"/>
<dbReference type="EC" id="6.2.1.17" evidence="2"/>
<dbReference type="EMBL" id="AK033376">
    <property type="protein sequence ID" value="BAC28254.1"/>
    <property type="molecule type" value="mRNA"/>
</dbReference>
<dbReference type="EMBL" id="AC111014">
    <property type="status" value="NOT_ANNOTATED_CDS"/>
    <property type="molecule type" value="Genomic_DNA"/>
</dbReference>
<dbReference type="EMBL" id="AC121946">
    <property type="status" value="NOT_ANNOTATED_CDS"/>
    <property type="molecule type" value="Genomic_DNA"/>
</dbReference>
<dbReference type="EMBL" id="AC134457">
    <property type="status" value="NOT_ANNOTATED_CDS"/>
    <property type="molecule type" value="Genomic_DNA"/>
</dbReference>
<dbReference type="EMBL" id="BC113198">
    <property type="protein sequence ID" value="AAI13199.1"/>
    <property type="molecule type" value="mRNA"/>
</dbReference>
<dbReference type="CCDS" id="CCDS24159.1">
    <molecule id="Q14DH7-2"/>
</dbReference>
<dbReference type="CCDS" id="CCDS48688.1">
    <molecule id="Q14DH7-1"/>
</dbReference>
<dbReference type="RefSeq" id="NP_001136276.1">
    <molecule id="Q14DH7-1"/>
    <property type="nucleotide sequence ID" value="NM_001142804.2"/>
</dbReference>
<dbReference type="RefSeq" id="NP_941038.2">
    <molecule id="Q14DH7-2"/>
    <property type="nucleotide sequence ID" value="NM_198636.4"/>
</dbReference>
<dbReference type="SMR" id="Q14DH7"/>
<dbReference type="FunCoup" id="Q14DH7">
    <property type="interactions" value="810"/>
</dbReference>
<dbReference type="STRING" id="10090.ENSMUSP00000128209"/>
<dbReference type="GlyGen" id="Q14DH7">
    <property type="glycosylation" value="1 site, 1 O-linked glycan (1 site)"/>
</dbReference>
<dbReference type="iPTMnet" id="Q14DH7"/>
<dbReference type="PhosphoSitePlus" id="Q14DH7"/>
<dbReference type="SwissPalm" id="Q14DH7"/>
<dbReference type="jPOST" id="Q14DH7"/>
<dbReference type="PaxDb" id="10090-ENSMUSP00000040823"/>
<dbReference type="PeptideAtlas" id="Q14DH7"/>
<dbReference type="ProteomicsDB" id="285851">
    <molecule id="Q14DH7-1"/>
</dbReference>
<dbReference type="ProteomicsDB" id="285852">
    <molecule id="Q14DH7-2"/>
</dbReference>
<dbReference type="Antibodypedia" id="29817">
    <property type="antibodies" value="115 antibodies from 27 providers"/>
</dbReference>
<dbReference type="DNASU" id="380660"/>
<dbReference type="Ensembl" id="ENSMUST00000044668.5">
    <molecule id="Q14DH7-2"/>
    <property type="protein sequence ID" value="ENSMUSP00000040823.5"/>
    <property type="gene ID" value="ENSMUSG00000035948.14"/>
</dbReference>
<dbReference type="Ensembl" id="ENSMUST00000165067.9">
    <molecule id="Q14DH7-1"/>
    <property type="protein sequence ID" value="ENSMUSP00000128209.2"/>
    <property type="gene ID" value="ENSMUSG00000035948.14"/>
</dbReference>
<dbReference type="GeneID" id="380660"/>
<dbReference type="KEGG" id="mmu:380660"/>
<dbReference type="UCSC" id="uc007gyv.2">
    <molecule id="Q14DH7-2"/>
    <property type="organism name" value="mouse"/>
</dbReference>
<dbReference type="UCSC" id="uc011xna.1">
    <molecule id="Q14DH7-1"/>
    <property type="organism name" value="mouse"/>
</dbReference>
<dbReference type="AGR" id="MGI:2685720"/>
<dbReference type="CTD" id="79611"/>
<dbReference type="MGI" id="MGI:2685720">
    <property type="gene designation" value="Acss3"/>
</dbReference>
<dbReference type="VEuPathDB" id="HostDB:ENSMUSG00000035948"/>
<dbReference type="eggNOG" id="KOG1175">
    <property type="taxonomic scope" value="Eukaryota"/>
</dbReference>
<dbReference type="GeneTree" id="ENSGT00940000157479"/>
<dbReference type="HOGENOM" id="CLU_000022_3_5_1"/>
<dbReference type="InParanoid" id="Q14DH7"/>
<dbReference type="OMA" id="FIMGRTD"/>
<dbReference type="OrthoDB" id="10253869at2759"/>
<dbReference type="PhylomeDB" id="Q14DH7"/>
<dbReference type="TreeFam" id="TF354241"/>
<dbReference type="Reactome" id="R-MMU-77111">
    <property type="pathway name" value="Synthesis of Ketone Bodies"/>
</dbReference>
<dbReference type="BioGRID-ORCS" id="380660">
    <property type="hits" value="2 hits in 78 CRISPR screens"/>
</dbReference>
<dbReference type="ChiTaRS" id="Acss3">
    <property type="organism name" value="mouse"/>
</dbReference>
<dbReference type="PRO" id="PR:Q14DH7"/>
<dbReference type="Proteomes" id="UP000000589">
    <property type="component" value="Chromosome 10"/>
</dbReference>
<dbReference type="RNAct" id="Q14DH7">
    <property type="molecule type" value="protein"/>
</dbReference>
<dbReference type="Bgee" id="ENSMUSG00000035948">
    <property type="expression patterns" value="Expressed in white adipose tissue and 156 other cell types or tissues"/>
</dbReference>
<dbReference type="GO" id="GO:0005759">
    <property type="term" value="C:mitochondrial matrix"/>
    <property type="evidence" value="ECO:0000250"/>
    <property type="project" value="UniProtKB"/>
</dbReference>
<dbReference type="GO" id="GO:0005739">
    <property type="term" value="C:mitochondrion"/>
    <property type="evidence" value="ECO:0007005"/>
    <property type="project" value="MGI"/>
</dbReference>
<dbReference type="GO" id="GO:0003987">
    <property type="term" value="F:acetate-CoA ligase activity"/>
    <property type="evidence" value="ECO:0000250"/>
    <property type="project" value="UniProtKB"/>
</dbReference>
<dbReference type="GO" id="GO:0005524">
    <property type="term" value="F:ATP binding"/>
    <property type="evidence" value="ECO:0007669"/>
    <property type="project" value="UniProtKB-KW"/>
</dbReference>
<dbReference type="GO" id="GO:0031956">
    <property type="term" value="F:medium-chain fatty acid-CoA ligase activity"/>
    <property type="evidence" value="ECO:0000250"/>
    <property type="project" value="UniProtKB"/>
</dbReference>
<dbReference type="GO" id="GO:0050218">
    <property type="term" value="F:propionate-CoA ligase activity"/>
    <property type="evidence" value="ECO:0000250"/>
    <property type="project" value="UniProtKB"/>
</dbReference>
<dbReference type="GO" id="GO:0006629">
    <property type="term" value="P:lipid metabolic process"/>
    <property type="evidence" value="ECO:0007669"/>
    <property type="project" value="UniProtKB-KW"/>
</dbReference>
<dbReference type="GO" id="GO:0044281">
    <property type="term" value="P:small molecule metabolic process"/>
    <property type="evidence" value="ECO:0007669"/>
    <property type="project" value="UniProtKB-ARBA"/>
</dbReference>
<dbReference type="CDD" id="cd05967">
    <property type="entry name" value="PrpE"/>
    <property type="match status" value="1"/>
</dbReference>
<dbReference type="FunFam" id="3.40.50.12780:FF:000011">
    <property type="entry name" value="Acetyl-coenzyme A synthetase 2-like, mitochondrial"/>
    <property type="match status" value="1"/>
</dbReference>
<dbReference type="FunFam" id="3.30.300.30:FF:000017">
    <property type="entry name" value="Acyl-CoA synthetase short-chain family member 3"/>
    <property type="match status" value="1"/>
</dbReference>
<dbReference type="Gene3D" id="3.30.300.30">
    <property type="match status" value="1"/>
</dbReference>
<dbReference type="Gene3D" id="3.40.50.12780">
    <property type="entry name" value="N-terminal domain of ligase-like"/>
    <property type="match status" value="1"/>
</dbReference>
<dbReference type="InterPro" id="IPR032387">
    <property type="entry name" value="ACAS_N"/>
</dbReference>
<dbReference type="InterPro" id="IPR025110">
    <property type="entry name" value="AMP-bd_C"/>
</dbReference>
<dbReference type="InterPro" id="IPR045851">
    <property type="entry name" value="AMP-bd_C_sf"/>
</dbReference>
<dbReference type="InterPro" id="IPR020845">
    <property type="entry name" value="AMP-binding_CS"/>
</dbReference>
<dbReference type="InterPro" id="IPR000873">
    <property type="entry name" value="AMP-dep_synth/lig_dom"/>
</dbReference>
<dbReference type="InterPro" id="IPR042099">
    <property type="entry name" value="ANL_N_sf"/>
</dbReference>
<dbReference type="PANTHER" id="PTHR43347">
    <property type="entry name" value="ACYL-COA SYNTHETASE"/>
    <property type="match status" value="1"/>
</dbReference>
<dbReference type="PANTHER" id="PTHR43347:SF3">
    <property type="entry name" value="ACYL-COA SYNTHETASE SHORT-CHAIN FAMILY MEMBER 3, MITOCHONDRIAL"/>
    <property type="match status" value="1"/>
</dbReference>
<dbReference type="Pfam" id="PF16177">
    <property type="entry name" value="ACAS_N"/>
    <property type="match status" value="1"/>
</dbReference>
<dbReference type="Pfam" id="PF00501">
    <property type="entry name" value="AMP-binding"/>
    <property type="match status" value="1"/>
</dbReference>
<dbReference type="Pfam" id="PF13193">
    <property type="entry name" value="AMP-binding_C"/>
    <property type="match status" value="1"/>
</dbReference>
<dbReference type="SUPFAM" id="SSF56801">
    <property type="entry name" value="Acetyl-CoA synthetase-like"/>
    <property type="match status" value="1"/>
</dbReference>
<dbReference type="PROSITE" id="PS00455">
    <property type="entry name" value="AMP_BINDING"/>
    <property type="match status" value="1"/>
</dbReference>
<evidence type="ECO:0000250" key="1"/>
<evidence type="ECO:0000250" key="2">
    <source>
        <dbReference type="UniProtKB" id="A0A0G2K047"/>
    </source>
</evidence>
<evidence type="ECO:0000255" key="3"/>
<evidence type="ECO:0000303" key="4">
    <source>
    </source>
</evidence>
<evidence type="ECO:0000303" key="5">
    <source>
    </source>
</evidence>
<evidence type="ECO:0000305" key="6"/>
<evidence type="ECO:0007744" key="7">
    <source>
    </source>
</evidence>
<evidence type="ECO:0007744" key="8">
    <source>
    </source>
</evidence>
<sequence>MKPSWLQCRKVTGAGTLGAPLPGSPSVRGAAVTRRALVAGFGGRGCRALTTGSGGEYKTHFAASVADPERFWGKAAEQISWYKPWTKTLESRYPPSTSWFVEGMLNICYNAIDRHIENGQGDKIAIIYDSPVTDTKATISYKEVLEQVSKLAGVLVKQGVKKGDTVVIYMPMIPQAIYTMLACARIGAIHSLIFGGFASKELSTRIDHAKPKVVVTASFGIEPGRKVEYIPLLEEALRIGQHRPDRVLIYSRPNMEKVPLMSGRDLDWEEEMAKAQSHDCVPVLSEHPLYILYTSGTTGLPKGVVRPTGGYAVMLNWTMSSIYGLKPGEVWWAASDLGWVVGHSYICYGPLLHGNTTVLYEGKPVGTPDAGAYFRVLAEHGVAALFTAPTAIRAIRQQDPGAALGKQYSLTRFKTLFVAGERCDVETLEWSKKVFRVPVLDHWWQTETGSPITASCIGLGNSKTPPPGQAGKCVPGYNVMILDDNMQKLKARSLGNIVVKLPLPPGAFSGLWKNQEAFKHLYFEKFPGYYDTMDAGYMDEEGYLYVMSRVDDVINVAGHRISAGAIEESVLSHGTVADCAVVGKEDPLKGHVPLALCVLKKDVNASEEQVLEEIVKHVRQSIGPVAAFRNAVFVKQLPKTRSGKIPRSTLSALVNGKPYKVTPTIEDPSIFGHIEEVLKQAV</sequence>
<reference key="1">
    <citation type="journal article" date="2005" name="Science">
        <title>The transcriptional landscape of the mammalian genome.</title>
        <authorList>
            <person name="Carninci P."/>
            <person name="Kasukawa T."/>
            <person name="Katayama S."/>
            <person name="Gough J."/>
            <person name="Frith M.C."/>
            <person name="Maeda N."/>
            <person name="Oyama R."/>
            <person name="Ravasi T."/>
            <person name="Lenhard B."/>
            <person name="Wells C."/>
            <person name="Kodzius R."/>
            <person name="Shimokawa K."/>
            <person name="Bajic V.B."/>
            <person name="Brenner S.E."/>
            <person name="Batalov S."/>
            <person name="Forrest A.R."/>
            <person name="Zavolan M."/>
            <person name="Davis M.J."/>
            <person name="Wilming L.G."/>
            <person name="Aidinis V."/>
            <person name="Allen J.E."/>
            <person name="Ambesi-Impiombato A."/>
            <person name="Apweiler R."/>
            <person name="Aturaliya R.N."/>
            <person name="Bailey T.L."/>
            <person name="Bansal M."/>
            <person name="Baxter L."/>
            <person name="Beisel K.W."/>
            <person name="Bersano T."/>
            <person name="Bono H."/>
            <person name="Chalk A.M."/>
            <person name="Chiu K.P."/>
            <person name="Choudhary V."/>
            <person name="Christoffels A."/>
            <person name="Clutterbuck D.R."/>
            <person name="Crowe M.L."/>
            <person name="Dalla E."/>
            <person name="Dalrymple B.P."/>
            <person name="de Bono B."/>
            <person name="Della Gatta G."/>
            <person name="di Bernardo D."/>
            <person name="Down T."/>
            <person name="Engstrom P."/>
            <person name="Fagiolini M."/>
            <person name="Faulkner G."/>
            <person name="Fletcher C.F."/>
            <person name="Fukushima T."/>
            <person name="Furuno M."/>
            <person name="Futaki S."/>
            <person name="Gariboldi M."/>
            <person name="Georgii-Hemming P."/>
            <person name="Gingeras T.R."/>
            <person name="Gojobori T."/>
            <person name="Green R.E."/>
            <person name="Gustincich S."/>
            <person name="Harbers M."/>
            <person name="Hayashi Y."/>
            <person name="Hensch T.K."/>
            <person name="Hirokawa N."/>
            <person name="Hill D."/>
            <person name="Huminiecki L."/>
            <person name="Iacono M."/>
            <person name="Ikeo K."/>
            <person name="Iwama A."/>
            <person name="Ishikawa T."/>
            <person name="Jakt M."/>
            <person name="Kanapin A."/>
            <person name="Katoh M."/>
            <person name="Kawasawa Y."/>
            <person name="Kelso J."/>
            <person name="Kitamura H."/>
            <person name="Kitano H."/>
            <person name="Kollias G."/>
            <person name="Krishnan S.P."/>
            <person name="Kruger A."/>
            <person name="Kummerfeld S.K."/>
            <person name="Kurochkin I.V."/>
            <person name="Lareau L.F."/>
            <person name="Lazarevic D."/>
            <person name="Lipovich L."/>
            <person name="Liu J."/>
            <person name="Liuni S."/>
            <person name="McWilliam S."/>
            <person name="Madan Babu M."/>
            <person name="Madera M."/>
            <person name="Marchionni L."/>
            <person name="Matsuda H."/>
            <person name="Matsuzawa S."/>
            <person name="Miki H."/>
            <person name="Mignone F."/>
            <person name="Miyake S."/>
            <person name="Morris K."/>
            <person name="Mottagui-Tabar S."/>
            <person name="Mulder N."/>
            <person name="Nakano N."/>
            <person name="Nakauchi H."/>
            <person name="Ng P."/>
            <person name="Nilsson R."/>
            <person name="Nishiguchi S."/>
            <person name="Nishikawa S."/>
            <person name="Nori F."/>
            <person name="Ohara O."/>
            <person name="Okazaki Y."/>
            <person name="Orlando V."/>
            <person name="Pang K.C."/>
            <person name="Pavan W.J."/>
            <person name="Pavesi G."/>
            <person name="Pesole G."/>
            <person name="Petrovsky N."/>
            <person name="Piazza S."/>
            <person name="Reed J."/>
            <person name="Reid J.F."/>
            <person name="Ring B.Z."/>
            <person name="Ringwald M."/>
            <person name="Rost B."/>
            <person name="Ruan Y."/>
            <person name="Salzberg S.L."/>
            <person name="Sandelin A."/>
            <person name="Schneider C."/>
            <person name="Schoenbach C."/>
            <person name="Sekiguchi K."/>
            <person name="Semple C.A."/>
            <person name="Seno S."/>
            <person name="Sessa L."/>
            <person name="Sheng Y."/>
            <person name="Shibata Y."/>
            <person name="Shimada H."/>
            <person name="Shimada K."/>
            <person name="Silva D."/>
            <person name="Sinclair B."/>
            <person name="Sperling S."/>
            <person name="Stupka E."/>
            <person name="Sugiura K."/>
            <person name="Sultana R."/>
            <person name="Takenaka Y."/>
            <person name="Taki K."/>
            <person name="Tammoja K."/>
            <person name="Tan S.L."/>
            <person name="Tang S."/>
            <person name="Taylor M.S."/>
            <person name="Tegner J."/>
            <person name="Teichmann S.A."/>
            <person name="Ueda H.R."/>
            <person name="van Nimwegen E."/>
            <person name="Verardo R."/>
            <person name="Wei C.L."/>
            <person name="Yagi K."/>
            <person name="Yamanishi H."/>
            <person name="Zabarovsky E."/>
            <person name="Zhu S."/>
            <person name="Zimmer A."/>
            <person name="Hide W."/>
            <person name="Bult C."/>
            <person name="Grimmond S.M."/>
            <person name="Teasdale R.D."/>
            <person name="Liu E.T."/>
            <person name="Brusic V."/>
            <person name="Quackenbush J."/>
            <person name="Wahlestedt C."/>
            <person name="Mattick J.S."/>
            <person name="Hume D.A."/>
            <person name="Kai C."/>
            <person name="Sasaki D."/>
            <person name="Tomaru Y."/>
            <person name="Fukuda S."/>
            <person name="Kanamori-Katayama M."/>
            <person name="Suzuki M."/>
            <person name="Aoki J."/>
            <person name="Arakawa T."/>
            <person name="Iida J."/>
            <person name="Imamura K."/>
            <person name="Itoh M."/>
            <person name="Kato T."/>
            <person name="Kawaji H."/>
            <person name="Kawagashira N."/>
            <person name="Kawashima T."/>
            <person name="Kojima M."/>
            <person name="Kondo S."/>
            <person name="Konno H."/>
            <person name="Nakano K."/>
            <person name="Ninomiya N."/>
            <person name="Nishio T."/>
            <person name="Okada M."/>
            <person name="Plessy C."/>
            <person name="Shibata K."/>
            <person name="Shiraki T."/>
            <person name="Suzuki S."/>
            <person name="Tagami M."/>
            <person name="Waki K."/>
            <person name="Watahiki A."/>
            <person name="Okamura-Oho Y."/>
            <person name="Suzuki H."/>
            <person name="Kawai J."/>
            <person name="Hayashizaki Y."/>
        </authorList>
    </citation>
    <scope>NUCLEOTIDE SEQUENCE [LARGE SCALE MRNA] (ISOFORM 2)</scope>
    <source>
        <strain>C57BL/6J</strain>
        <tissue>Lung</tissue>
    </source>
</reference>
<reference key="2">
    <citation type="journal article" date="2009" name="PLoS Biol.">
        <title>Lineage-specific biology revealed by a finished genome assembly of the mouse.</title>
        <authorList>
            <person name="Church D.M."/>
            <person name="Goodstadt L."/>
            <person name="Hillier L.W."/>
            <person name="Zody M.C."/>
            <person name="Goldstein S."/>
            <person name="She X."/>
            <person name="Bult C.J."/>
            <person name="Agarwala R."/>
            <person name="Cherry J.L."/>
            <person name="DiCuccio M."/>
            <person name="Hlavina W."/>
            <person name="Kapustin Y."/>
            <person name="Meric P."/>
            <person name="Maglott D."/>
            <person name="Birtle Z."/>
            <person name="Marques A.C."/>
            <person name="Graves T."/>
            <person name="Zhou S."/>
            <person name="Teague B."/>
            <person name="Potamousis K."/>
            <person name="Churas C."/>
            <person name="Place M."/>
            <person name="Herschleb J."/>
            <person name="Runnheim R."/>
            <person name="Forrest D."/>
            <person name="Amos-Landgraf J."/>
            <person name="Schwartz D.C."/>
            <person name="Cheng Z."/>
            <person name="Lindblad-Toh K."/>
            <person name="Eichler E.E."/>
            <person name="Ponting C.P."/>
        </authorList>
    </citation>
    <scope>NUCLEOTIDE SEQUENCE [LARGE SCALE GENOMIC DNA]</scope>
    <source>
        <strain>C57BL/6J</strain>
    </source>
</reference>
<reference key="3">
    <citation type="journal article" date="2004" name="Genome Res.">
        <title>The status, quality, and expansion of the NIH full-length cDNA project: the Mammalian Gene Collection (MGC).</title>
        <authorList>
            <consortium name="The MGC Project Team"/>
        </authorList>
    </citation>
    <scope>NUCLEOTIDE SEQUENCE [LARGE SCALE MRNA] (ISOFORM 2)</scope>
</reference>
<reference key="4">
    <citation type="journal article" date="2010" name="Cell">
        <title>A tissue-specific atlas of mouse protein phosphorylation and expression.</title>
        <authorList>
            <person name="Huttlin E.L."/>
            <person name="Jedrychowski M.P."/>
            <person name="Elias J.E."/>
            <person name="Goswami T."/>
            <person name="Rad R."/>
            <person name="Beausoleil S.A."/>
            <person name="Villen J."/>
            <person name="Haas W."/>
            <person name="Sowa M.E."/>
            <person name="Gygi S.P."/>
        </authorList>
    </citation>
    <scope>IDENTIFICATION BY MASS SPECTROMETRY [LARGE SCALE ANALYSIS]</scope>
    <source>
        <tissue>Brown adipose tissue</tissue>
        <tissue>Kidney</tissue>
        <tissue>Liver</tissue>
        <tissue>Lung</tissue>
    </source>
</reference>
<reference key="5">
    <citation type="journal article" date="2013" name="Mol. Cell">
        <title>SIRT5-mediated lysine desuccinylation impacts diverse metabolic pathways.</title>
        <authorList>
            <person name="Park J."/>
            <person name="Chen Y."/>
            <person name="Tishkoff D.X."/>
            <person name="Peng C."/>
            <person name="Tan M."/>
            <person name="Dai L."/>
            <person name="Xie Z."/>
            <person name="Zhang Y."/>
            <person name="Zwaans B.M."/>
            <person name="Skinner M.E."/>
            <person name="Lombard D.B."/>
            <person name="Zhao Y."/>
        </authorList>
    </citation>
    <scope>SUCCINYLATION [LARGE SCALE ANALYSIS] AT LYS-513</scope>
    <scope>IDENTIFICATION BY MASS SPECTROMETRY [LARGE SCALE ANALYSIS]</scope>
    <source>
        <tissue>Liver</tissue>
    </source>
</reference>
<reference key="6">
    <citation type="journal article" date="2013" name="Proc. Natl. Acad. Sci. U.S.A.">
        <title>Label-free quantitative proteomics of the lysine acetylome in mitochondria identifies substrates of SIRT3 in metabolic pathways.</title>
        <authorList>
            <person name="Rardin M.J."/>
            <person name="Newman J.C."/>
            <person name="Held J.M."/>
            <person name="Cusack M.P."/>
            <person name="Sorensen D.J."/>
            <person name="Li B."/>
            <person name="Schilling B."/>
            <person name="Mooney S.D."/>
            <person name="Kahn C.R."/>
            <person name="Verdin E."/>
            <person name="Gibson B.W."/>
        </authorList>
    </citation>
    <scope>ACETYLATION [LARGE SCALE ANALYSIS] AT LYS-519</scope>
    <scope>IDENTIFICATION BY MASS SPECTROMETRY [LARGE SCALE ANALYSIS]</scope>
    <source>
        <tissue>Liver</tissue>
    </source>
</reference>
<comment type="function">
    <text evidence="2">Catalyzes the synthesis of acetyl-CoA from short-chain fatty acids (By similarity). Propionate is the preferred substrate but can also utilize acetate and butyrate with a much lower affinity (By similarity).</text>
</comment>
<comment type="catalytic activity">
    <reaction evidence="2">
        <text>acetate + ATP + CoA = acetyl-CoA + AMP + diphosphate</text>
        <dbReference type="Rhea" id="RHEA:23176"/>
        <dbReference type="ChEBI" id="CHEBI:30089"/>
        <dbReference type="ChEBI" id="CHEBI:30616"/>
        <dbReference type="ChEBI" id="CHEBI:33019"/>
        <dbReference type="ChEBI" id="CHEBI:57287"/>
        <dbReference type="ChEBI" id="CHEBI:57288"/>
        <dbReference type="ChEBI" id="CHEBI:456215"/>
        <dbReference type="EC" id="6.2.1.1"/>
    </reaction>
    <physiologicalReaction direction="left-to-right" evidence="2">
        <dbReference type="Rhea" id="RHEA:23177"/>
    </physiologicalReaction>
</comment>
<comment type="catalytic activity">
    <reaction evidence="2">
        <text>propanoate + ATP + CoA = propanoyl-CoA + AMP + diphosphate</text>
        <dbReference type="Rhea" id="RHEA:20373"/>
        <dbReference type="ChEBI" id="CHEBI:17272"/>
        <dbReference type="ChEBI" id="CHEBI:30616"/>
        <dbReference type="ChEBI" id="CHEBI:33019"/>
        <dbReference type="ChEBI" id="CHEBI:57287"/>
        <dbReference type="ChEBI" id="CHEBI:57392"/>
        <dbReference type="ChEBI" id="CHEBI:456215"/>
        <dbReference type="EC" id="6.2.1.17"/>
    </reaction>
    <physiologicalReaction direction="left-to-right" evidence="2">
        <dbReference type="Rhea" id="RHEA:20374"/>
    </physiologicalReaction>
</comment>
<comment type="catalytic activity">
    <reaction evidence="2">
        <text>butanoate + ATP + CoA = butanoyl-CoA + AMP + diphosphate</text>
        <dbReference type="Rhea" id="RHEA:46172"/>
        <dbReference type="ChEBI" id="CHEBI:17968"/>
        <dbReference type="ChEBI" id="CHEBI:30616"/>
        <dbReference type="ChEBI" id="CHEBI:33019"/>
        <dbReference type="ChEBI" id="CHEBI:57287"/>
        <dbReference type="ChEBI" id="CHEBI:57371"/>
        <dbReference type="ChEBI" id="CHEBI:456215"/>
    </reaction>
    <physiologicalReaction direction="left-to-right" evidence="2">
        <dbReference type="Rhea" id="RHEA:46173"/>
    </physiologicalReaction>
</comment>
<comment type="subcellular location">
    <subcellularLocation>
        <location evidence="2">Mitochondrion matrix</location>
    </subcellularLocation>
</comment>
<comment type="alternative products">
    <event type="alternative splicing"/>
    <isoform>
        <id>Q14DH7-1</id>
        <name>1</name>
        <sequence type="displayed"/>
    </isoform>
    <isoform>
        <id>Q14DH7-2</id>
        <name>2</name>
        <sequence type="described" ref="VSP_031693 VSP_031694"/>
    </isoform>
</comment>
<comment type="similarity">
    <text evidence="6">Belongs to the ATP-dependent AMP-binding enzyme family.</text>
</comment>
<keyword id="KW-0007">Acetylation</keyword>
<keyword id="KW-0025">Alternative splicing</keyword>
<keyword id="KW-0067">ATP-binding</keyword>
<keyword id="KW-0436">Ligase</keyword>
<keyword id="KW-0443">Lipid metabolism</keyword>
<keyword id="KW-0496">Mitochondrion</keyword>
<keyword id="KW-0547">Nucleotide-binding</keyword>
<keyword id="KW-1185">Reference proteome</keyword>
<keyword id="KW-0809">Transit peptide</keyword>
<name>ACSS3_MOUSE</name>
<accession>Q14DH7</accession>
<accession>Q8BZX0</accession>
<proteinExistence type="evidence at protein level"/>
<organism>
    <name type="scientific">Mus musculus</name>
    <name type="common">Mouse</name>
    <dbReference type="NCBI Taxonomy" id="10090"/>
    <lineage>
        <taxon>Eukaryota</taxon>
        <taxon>Metazoa</taxon>
        <taxon>Chordata</taxon>
        <taxon>Craniata</taxon>
        <taxon>Vertebrata</taxon>
        <taxon>Euteleostomi</taxon>
        <taxon>Mammalia</taxon>
        <taxon>Eutheria</taxon>
        <taxon>Euarchontoglires</taxon>
        <taxon>Glires</taxon>
        <taxon>Rodentia</taxon>
        <taxon>Myomorpha</taxon>
        <taxon>Muroidea</taxon>
        <taxon>Muridae</taxon>
        <taxon>Murinae</taxon>
        <taxon>Mus</taxon>
        <taxon>Mus</taxon>
    </lineage>
</organism>
<feature type="transit peptide" description="Mitochondrion" evidence="3">
    <location>
        <begin position="1"/>
        <end position="29"/>
    </location>
</feature>
<feature type="chain" id="PRO_0000320625" description="Acyl-CoA synthetase short-chain family member 3, mitochondrial">
    <location>
        <begin position="30"/>
        <end position="682"/>
    </location>
</feature>
<feature type="binding site" evidence="1">
    <location>
        <begin position="222"/>
        <end position="225"/>
    </location>
    <ligand>
        <name>CoA</name>
        <dbReference type="ChEBI" id="CHEBI:57287"/>
    </ligand>
</feature>
<feature type="binding site" evidence="1">
    <location>
        <begin position="420"/>
        <end position="422"/>
    </location>
    <ligand>
        <name>ATP</name>
        <dbReference type="ChEBI" id="CHEBI:30616"/>
    </ligand>
</feature>
<feature type="binding site" evidence="1">
    <location>
        <begin position="441"/>
        <end position="446"/>
    </location>
    <ligand>
        <name>ATP</name>
        <dbReference type="ChEBI" id="CHEBI:30616"/>
    </ligand>
</feature>
<feature type="binding site" evidence="1">
    <location>
        <position position="534"/>
    </location>
    <ligand>
        <name>ATP</name>
        <dbReference type="ChEBI" id="CHEBI:30616"/>
    </ligand>
</feature>
<feature type="binding site" evidence="1">
    <location>
        <position position="549"/>
    </location>
    <ligand>
        <name>ATP</name>
        <dbReference type="ChEBI" id="CHEBI:30616"/>
    </ligand>
</feature>
<feature type="binding site" evidence="1">
    <location>
        <position position="560"/>
    </location>
    <ligand>
        <name>ATP</name>
        <dbReference type="ChEBI" id="CHEBI:30616"/>
    </ligand>
</feature>
<feature type="binding site" evidence="1">
    <location>
        <position position="619"/>
    </location>
    <ligand>
        <name>CoA</name>
        <dbReference type="ChEBI" id="CHEBI:57287"/>
    </ligand>
</feature>
<feature type="modified residue" description="N6-succinyllysine" evidence="8">
    <location>
        <position position="513"/>
    </location>
</feature>
<feature type="modified residue" description="N6-acetyllysine" evidence="7">
    <location>
        <position position="519"/>
    </location>
</feature>
<feature type="splice variant" id="VSP_031693" description="In isoform 2." evidence="4 5">
    <original>V</original>
    <variation>GRYLLHHSAESLTPPAMGK</variation>
    <location>
        <position position="479"/>
    </location>
</feature>
<feature type="splice variant" id="VSP_031694" description="In isoform 2." evidence="4 5">
    <location>
        <begin position="480"/>
        <end position="682"/>
    </location>
</feature>
<feature type="sequence conflict" description="In Ref. 1; BAC28254." evidence="6" ref="1">
    <original>Y</original>
    <variation>N</variation>
    <location>
        <position position="477"/>
    </location>
</feature>
<protein>
    <recommendedName>
        <fullName>Acyl-CoA synthetase short-chain family member 3, mitochondrial</fullName>
        <ecNumber evidence="2">6.2.1.1</ecNumber>
    </recommendedName>
    <alternativeName>
        <fullName>Acetate--CoA ligase 3</fullName>
    </alternativeName>
    <alternativeName>
        <fullName>Propionate--CoA ligase</fullName>
        <ecNumber evidence="2">6.2.1.17</ecNumber>
    </alternativeName>
</protein>
<gene>
    <name type="primary">Acss3</name>
</gene>